<sequence>MMSKLGALLTICLLLFSLTAVPLDGDQHADQPAQRLQDRIPTEDHPLFDPNKRCCDDSECSYSCWPCCYG</sequence>
<feature type="signal peptide" evidence="3">
    <location>
        <begin position="1"/>
        <end position="20"/>
    </location>
</feature>
<feature type="propeptide" id="PRO_0000404892" evidence="1">
    <location>
        <begin position="21"/>
        <end position="53"/>
    </location>
</feature>
<feature type="peptide" id="PRO_0000404893" description="Conotoxin TxMMSK-02">
    <location>
        <begin position="54"/>
        <end position="69"/>
    </location>
</feature>
<feature type="modified residue" description="4-hydroxyproline" evidence="1">
    <location>
        <position position="66"/>
    </location>
</feature>
<feature type="modified residue" description="Tyrosine amide" evidence="1">
    <location>
        <position position="69"/>
    </location>
</feature>
<feature type="disulfide bond" evidence="2">
    <location>
        <begin position="54"/>
        <end position="68"/>
    </location>
</feature>
<feature type="disulfide bond" evidence="2">
    <location>
        <begin position="55"/>
        <end position="64"/>
    </location>
</feature>
<feature type="disulfide bond" evidence="2">
    <location>
        <begin position="60"/>
        <end position="67"/>
    </location>
</feature>
<protein>
    <recommendedName>
        <fullName>Conotoxin TxMMSK-02</fullName>
    </recommendedName>
</protein>
<evidence type="ECO:0000250" key="1"/>
<evidence type="ECO:0000250" key="2">
    <source>
        <dbReference type="UniProtKB" id="P0CI24"/>
    </source>
</evidence>
<evidence type="ECO:0000255" key="3"/>
<evidence type="ECO:0000305" key="4"/>
<dbReference type="EMBL" id="AF214927">
    <property type="protein sequence ID" value="AAG60355.1"/>
    <property type="molecule type" value="mRNA"/>
</dbReference>
<dbReference type="ConoServer" id="614">
    <property type="toxin name" value="TxMMSK-02 precursor"/>
</dbReference>
<dbReference type="GO" id="GO:0005576">
    <property type="term" value="C:extracellular region"/>
    <property type="evidence" value="ECO:0007669"/>
    <property type="project" value="UniProtKB-SubCell"/>
</dbReference>
<dbReference type="GO" id="GO:0008200">
    <property type="term" value="F:ion channel inhibitor activity"/>
    <property type="evidence" value="ECO:0007669"/>
    <property type="project" value="InterPro"/>
</dbReference>
<dbReference type="GO" id="GO:0090729">
    <property type="term" value="F:toxin activity"/>
    <property type="evidence" value="ECO:0007669"/>
    <property type="project" value="UniProtKB-KW"/>
</dbReference>
<dbReference type="InterPro" id="IPR004214">
    <property type="entry name" value="Conotoxin"/>
</dbReference>
<dbReference type="Pfam" id="PF02950">
    <property type="entry name" value="Conotoxin"/>
    <property type="match status" value="1"/>
</dbReference>
<organism>
    <name type="scientific">Conus textile</name>
    <name type="common">Cloth-of-gold cone</name>
    <dbReference type="NCBI Taxonomy" id="6494"/>
    <lineage>
        <taxon>Eukaryota</taxon>
        <taxon>Metazoa</taxon>
        <taxon>Spiralia</taxon>
        <taxon>Lophotrochozoa</taxon>
        <taxon>Mollusca</taxon>
        <taxon>Gastropoda</taxon>
        <taxon>Caenogastropoda</taxon>
        <taxon>Neogastropoda</taxon>
        <taxon>Conoidea</taxon>
        <taxon>Conidae</taxon>
        <taxon>Conus</taxon>
        <taxon>Cylinder</taxon>
    </lineage>
</organism>
<keyword id="KW-0027">Amidation</keyword>
<keyword id="KW-0165">Cleavage on pair of basic residues</keyword>
<keyword id="KW-1015">Disulfide bond</keyword>
<keyword id="KW-0379">Hydroxylation</keyword>
<keyword id="KW-0528">Neurotoxin</keyword>
<keyword id="KW-0964">Secreted</keyword>
<keyword id="KW-0732">Signal</keyword>
<keyword id="KW-0800">Toxin</keyword>
<proteinExistence type="evidence at transcript level"/>
<accession>Q9BPJ6</accession>
<name>M232_CONTE</name>
<reference key="1">
    <citation type="journal article" date="2001" name="Mol. Biol. Evol.">
        <title>Mechanisms for evolving hypervariability: the case of conopeptides.</title>
        <authorList>
            <person name="Conticello S.G."/>
            <person name="Gilad Y."/>
            <person name="Avidan N."/>
            <person name="Ben-Asher E."/>
            <person name="Levy Z."/>
            <person name="Fainzilber M."/>
        </authorList>
    </citation>
    <scope>NUCLEOTIDE SEQUENCE [MRNA]</scope>
    <source>
        <tissue>Venom duct</tissue>
    </source>
</reference>
<comment type="subcellular location">
    <subcellularLocation>
        <location evidence="1">Secreted</location>
    </subcellularLocation>
</comment>
<comment type="tissue specificity">
    <text>Expressed by the venom duct.</text>
</comment>
<comment type="domain">
    <text>The cysteine framework is III (CC-C-C-CC). Classified in the M-2 branch, since 2 residues stand between the fourth and the fifth cysteine residues.</text>
</comment>
<comment type="similarity">
    <text evidence="4">Belongs to the conotoxin M superfamily.</text>
</comment>